<protein>
    <recommendedName>
        <fullName evidence="1">Imidazole glycerol phosphate synthase subunit HisH</fullName>
        <ecNumber evidence="1">4.3.2.10</ecNumber>
    </recommendedName>
    <alternativeName>
        <fullName evidence="1">IGP synthase glutaminase subunit</fullName>
        <ecNumber evidence="1">3.5.1.2</ecNumber>
    </alternativeName>
    <alternativeName>
        <fullName evidence="1">IGP synthase subunit HisH</fullName>
    </alternativeName>
    <alternativeName>
        <fullName evidence="1">ImGP synthase subunit HisH</fullName>
        <shortName evidence="1">IGPS subunit HisH</shortName>
    </alternativeName>
</protein>
<proteinExistence type="inferred from homology"/>
<dbReference type="EC" id="4.3.2.10" evidence="1"/>
<dbReference type="EC" id="3.5.1.2" evidence="1"/>
<dbReference type="EMBL" id="CP000557">
    <property type="protein sequence ID" value="ABO68368.1"/>
    <property type="molecule type" value="Genomic_DNA"/>
</dbReference>
<dbReference type="RefSeq" id="WP_008880307.1">
    <property type="nucleotide sequence ID" value="NC_009328.1"/>
</dbReference>
<dbReference type="SMR" id="A4ISR4"/>
<dbReference type="MEROPS" id="C26.965"/>
<dbReference type="GeneID" id="87622828"/>
<dbReference type="KEGG" id="gtn:GTNG_3023"/>
<dbReference type="eggNOG" id="COG0118">
    <property type="taxonomic scope" value="Bacteria"/>
</dbReference>
<dbReference type="HOGENOM" id="CLU_071837_2_2_9"/>
<dbReference type="UniPathway" id="UPA00031">
    <property type="reaction ID" value="UER00010"/>
</dbReference>
<dbReference type="Proteomes" id="UP000001578">
    <property type="component" value="Chromosome"/>
</dbReference>
<dbReference type="GO" id="GO:0005737">
    <property type="term" value="C:cytoplasm"/>
    <property type="evidence" value="ECO:0007669"/>
    <property type="project" value="UniProtKB-SubCell"/>
</dbReference>
<dbReference type="GO" id="GO:0004359">
    <property type="term" value="F:glutaminase activity"/>
    <property type="evidence" value="ECO:0007669"/>
    <property type="project" value="UniProtKB-EC"/>
</dbReference>
<dbReference type="GO" id="GO:0000107">
    <property type="term" value="F:imidazoleglycerol-phosphate synthase activity"/>
    <property type="evidence" value="ECO:0007669"/>
    <property type="project" value="UniProtKB-UniRule"/>
</dbReference>
<dbReference type="GO" id="GO:0016829">
    <property type="term" value="F:lyase activity"/>
    <property type="evidence" value="ECO:0007669"/>
    <property type="project" value="UniProtKB-KW"/>
</dbReference>
<dbReference type="GO" id="GO:0000105">
    <property type="term" value="P:L-histidine biosynthetic process"/>
    <property type="evidence" value="ECO:0007669"/>
    <property type="project" value="UniProtKB-UniRule"/>
</dbReference>
<dbReference type="CDD" id="cd01748">
    <property type="entry name" value="GATase1_IGP_Synthase"/>
    <property type="match status" value="1"/>
</dbReference>
<dbReference type="Gene3D" id="3.40.50.880">
    <property type="match status" value="1"/>
</dbReference>
<dbReference type="HAMAP" id="MF_00278">
    <property type="entry name" value="HisH"/>
    <property type="match status" value="1"/>
</dbReference>
<dbReference type="InterPro" id="IPR029062">
    <property type="entry name" value="Class_I_gatase-like"/>
</dbReference>
<dbReference type="InterPro" id="IPR017926">
    <property type="entry name" value="GATASE"/>
</dbReference>
<dbReference type="InterPro" id="IPR010139">
    <property type="entry name" value="Imidazole-glycPsynth_HisH"/>
</dbReference>
<dbReference type="NCBIfam" id="TIGR01855">
    <property type="entry name" value="IMP_synth_hisH"/>
    <property type="match status" value="1"/>
</dbReference>
<dbReference type="PANTHER" id="PTHR42701">
    <property type="entry name" value="IMIDAZOLE GLYCEROL PHOSPHATE SYNTHASE SUBUNIT HISH"/>
    <property type="match status" value="1"/>
</dbReference>
<dbReference type="PANTHER" id="PTHR42701:SF1">
    <property type="entry name" value="IMIDAZOLE GLYCEROL PHOSPHATE SYNTHASE SUBUNIT HISH"/>
    <property type="match status" value="1"/>
</dbReference>
<dbReference type="Pfam" id="PF00117">
    <property type="entry name" value="GATase"/>
    <property type="match status" value="1"/>
</dbReference>
<dbReference type="PIRSF" id="PIRSF000495">
    <property type="entry name" value="Amidotransf_hisH"/>
    <property type="match status" value="1"/>
</dbReference>
<dbReference type="SUPFAM" id="SSF52317">
    <property type="entry name" value="Class I glutamine amidotransferase-like"/>
    <property type="match status" value="1"/>
</dbReference>
<dbReference type="PROSITE" id="PS51273">
    <property type="entry name" value="GATASE_TYPE_1"/>
    <property type="match status" value="1"/>
</dbReference>
<organism>
    <name type="scientific">Geobacillus thermodenitrificans (strain NG80-2)</name>
    <dbReference type="NCBI Taxonomy" id="420246"/>
    <lineage>
        <taxon>Bacteria</taxon>
        <taxon>Bacillati</taxon>
        <taxon>Bacillota</taxon>
        <taxon>Bacilli</taxon>
        <taxon>Bacillales</taxon>
        <taxon>Anoxybacillaceae</taxon>
        <taxon>Geobacillus</taxon>
    </lineage>
</organism>
<sequence>MTMIGVIDYGMGNLYSVSKALERLGCPYIVSGDKEELARVRGLILPGVGSFRDAMHILRETGLADFIRSAVQDGTPLLGICLGMQLLFDESEENGPTEGLGLLRGRVVRFPGVTNDGEPYKVPHMGWNRLRFHRSSPLLDGVEEGHVYFVHSYYVVPGEEEVVLASSEYDVDVPAVVGRDNVFGTQFHPEKSGAVGMSILNRYVGIVTGRENG</sequence>
<accession>A4ISR4</accession>
<name>HIS5_GEOTN</name>
<comment type="function">
    <text evidence="1">IGPS catalyzes the conversion of PRFAR and glutamine to IGP, AICAR and glutamate. The HisH subunit catalyzes the hydrolysis of glutamine to glutamate and ammonia as part of the synthesis of IGP and AICAR. The resulting ammonia molecule is channeled to the active site of HisF.</text>
</comment>
<comment type="catalytic activity">
    <reaction evidence="1">
        <text>5-[(5-phospho-1-deoxy-D-ribulos-1-ylimino)methylamino]-1-(5-phospho-beta-D-ribosyl)imidazole-4-carboxamide + L-glutamine = D-erythro-1-(imidazol-4-yl)glycerol 3-phosphate + 5-amino-1-(5-phospho-beta-D-ribosyl)imidazole-4-carboxamide + L-glutamate + H(+)</text>
        <dbReference type="Rhea" id="RHEA:24793"/>
        <dbReference type="ChEBI" id="CHEBI:15378"/>
        <dbReference type="ChEBI" id="CHEBI:29985"/>
        <dbReference type="ChEBI" id="CHEBI:58278"/>
        <dbReference type="ChEBI" id="CHEBI:58359"/>
        <dbReference type="ChEBI" id="CHEBI:58475"/>
        <dbReference type="ChEBI" id="CHEBI:58525"/>
        <dbReference type="EC" id="4.3.2.10"/>
    </reaction>
</comment>
<comment type="catalytic activity">
    <reaction evidence="1">
        <text>L-glutamine + H2O = L-glutamate + NH4(+)</text>
        <dbReference type="Rhea" id="RHEA:15889"/>
        <dbReference type="ChEBI" id="CHEBI:15377"/>
        <dbReference type="ChEBI" id="CHEBI:28938"/>
        <dbReference type="ChEBI" id="CHEBI:29985"/>
        <dbReference type="ChEBI" id="CHEBI:58359"/>
        <dbReference type="EC" id="3.5.1.2"/>
    </reaction>
</comment>
<comment type="pathway">
    <text evidence="1">Amino-acid biosynthesis; L-histidine biosynthesis; L-histidine from 5-phospho-alpha-D-ribose 1-diphosphate: step 5/9.</text>
</comment>
<comment type="subunit">
    <text evidence="1">Heterodimer of HisH and HisF.</text>
</comment>
<comment type="subcellular location">
    <subcellularLocation>
        <location evidence="1">Cytoplasm</location>
    </subcellularLocation>
</comment>
<feature type="chain" id="PRO_1000119376" description="Imidazole glycerol phosphate synthase subunit HisH">
    <location>
        <begin position="1"/>
        <end position="213"/>
    </location>
</feature>
<feature type="domain" description="Glutamine amidotransferase type-1" evidence="1">
    <location>
        <begin position="3"/>
        <end position="213"/>
    </location>
</feature>
<feature type="active site" description="Nucleophile" evidence="1">
    <location>
        <position position="81"/>
    </location>
</feature>
<feature type="active site" evidence="1">
    <location>
        <position position="188"/>
    </location>
</feature>
<feature type="active site" evidence="1">
    <location>
        <position position="190"/>
    </location>
</feature>
<keyword id="KW-0028">Amino-acid biosynthesis</keyword>
<keyword id="KW-0963">Cytoplasm</keyword>
<keyword id="KW-0315">Glutamine amidotransferase</keyword>
<keyword id="KW-0368">Histidine biosynthesis</keyword>
<keyword id="KW-0378">Hydrolase</keyword>
<keyword id="KW-0456">Lyase</keyword>
<reference key="1">
    <citation type="journal article" date="2007" name="Proc. Natl. Acad. Sci. U.S.A.">
        <title>Genome and proteome of long-chain alkane degrading Geobacillus thermodenitrificans NG80-2 isolated from a deep-subsurface oil reservoir.</title>
        <authorList>
            <person name="Feng L."/>
            <person name="Wang W."/>
            <person name="Cheng J."/>
            <person name="Ren Y."/>
            <person name="Zhao G."/>
            <person name="Gao C."/>
            <person name="Tang Y."/>
            <person name="Liu X."/>
            <person name="Han W."/>
            <person name="Peng X."/>
            <person name="Liu R."/>
            <person name="Wang L."/>
        </authorList>
    </citation>
    <scope>NUCLEOTIDE SEQUENCE [LARGE SCALE GENOMIC DNA]</scope>
    <source>
        <strain>NG80-2</strain>
    </source>
</reference>
<evidence type="ECO:0000255" key="1">
    <source>
        <dbReference type="HAMAP-Rule" id="MF_00278"/>
    </source>
</evidence>
<gene>
    <name evidence="1" type="primary">hisH</name>
    <name type="ordered locus">GTNG_3023</name>
</gene>